<keyword id="KW-0963">Cytoplasm</keyword>
<keyword id="KW-0489">Methyltransferase</keyword>
<keyword id="KW-1185">Reference proteome</keyword>
<keyword id="KW-0949">S-adenosyl-L-methionine</keyword>
<keyword id="KW-0808">Transferase</keyword>
<name>BN3D2_DANRE</name>
<dbReference type="EC" id="2.1.1.-"/>
<dbReference type="EMBL" id="BX005329">
    <property type="protein sequence ID" value="CAP09428.1"/>
    <property type="molecule type" value="Genomic_DNA"/>
</dbReference>
<dbReference type="RefSeq" id="XP_017208938.1">
    <property type="nucleotide sequence ID" value="XM_017353449.1"/>
</dbReference>
<dbReference type="SMR" id="A8E7D2"/>
<dbReference type="FunCoup" id="A8E7D2">
    <property type="interactions" value="751"/>
</dbReference>
<dbReference type="STRING" id="7955.ENSDARP00000153845"/>
<dbReference type="PaxDb" id="7955-ENSDARP00000098771"/>
<dbReference type="AGR" id="ZFIN:ZDB-GENE-050208-327"/>
<dbReference type="ZFIN" id="ZDB-GENE-050208-327">
    <property type="gene designation" value="bcdin3d"/>
</dbReference>
<dbReference type="eggNOG" id="KOG2899">
    <property type="taxonomic scope" value="Eukaryota"/>
</dbReference>
<dbReference type="InParanoid" id="A8E7D2"/>
<dbReference type="OrthoDB" id="273070at2759"/>
<dbReference type="PRO" id="PR:A8E7D2"/>
<dbReference type="Proteomes" id="UP000000437">
    <property type="component" value="Chromosome 22"/>
</dbReference>
<dbReference type="GO" id="GO:0005737">
    <property type="term" value="C:cytoplasm"/>
    <property type="evidence" value="ECO:0000250"/>
    <property type="project" value="UniProtKB"/>
</dbReference>
<dbReference type="GO" id="GO:0008171">
    <property type="term" value="F:O-methyltransferase activity"/>
    <property type="evidence" value="ECO:0000318"/>
    <property type="project" value="GO_Central"/>
</dbReference>
<dbReference type="GO" id="GO:0008173">
    <property type="term" value="F:RNA methyltransferase activity"/>
    <property type="evidence" value="ECO:0000250"/>
    <property type="project" value="UniProtKB"/>
</dbReference>
<dbReference type="GO" id="GO:0090486">
    <property type="term" value="F:small RNA 2'-O-methyltransferase activity"/>
    <property type="evidence" value="ECO:0000250"/>
    <property type="project" value="UniProtKB"/>
</dbReference>
<dbReference type="GO" id="GO:0032259">
    <property type="term" value="P:methylation"/>
    <property type="evidence" value="ECO:0007669"/>
    <property type="project" value="UniProtKB-KW"/>
</dbReference>
<dbReference type="GO" id="GO:2000632">
    <property type="term" value="P:negative regulation of pre-miRNA processing"/>
    <property type="evidence" value="ECO:0000250"/>
    <property type="project" value="UniProtKB"/>
</dbReference>
<dbReference type="FunFam" id="3.40.50.150:FF:000138">
    <property type="entry name" value="BCDIN3 domain containing RNA methyltransferase"/>
    <property type="match status" value="1"/>
</dbReference>
<dbReference type="Gene3D" id="3.40.50.150">
    <property type="entry name" value="Vaccinia Virus protein VP39"/>
    <property type="match status" value="1"/>
</dbReference>
<dbReference type="InterPro" id="IPR039772">
    <property type="entry name" value="Bin3-like"/>
</dbReference>
<dbReference type="InterPro" id="IPR010675">
    <property type="entry name" value="Bin3_C"/>
</dbReference>
<dbReference type="InterPro" id="IPR024160">
    <property type="entry name" value="BIN3_SAM-bd_dom"/>
</dbReference>
<dbReference type="InterPro" id="IPR029063">
    <property type="entry name" value="SAM-dependent_MTases_sf"/>
</dbReference>
<dbReference type="PANTHER" id="PTHR12315">
    <property type="entry name" value="BICOID-INTERACTING PROTEIN RELATED"/>
    <property type="match status" value="1"/>
</dbReference>
<dbReference type="PANTHER" id="PTHR12315:SF1">
    <property type="entry name" value="RNA 5'-MONOPHOSPHATE METHYLTRANSFERASE"/>
    <property type="match status" value="1"/>
</dbReference>
<dbReference type="Pfam" id="PF06859">
    <property type="entry name" value="Bin3"/>
    <property type="match status" value="1"/>
</dbReference>
<dbReference type="SUPFAM" id="SSF53335">
    <property type="entry name" value="S-adenosyl-L-methionine-dependent methyltransferases"/>
    <property type="match status" value="1"/>
</dbReference>
<dbReference type="PROSITE" id="PS51515">
    <property type="entry name" value="BIN3_SAM"/>
    <property type="match status" value="1"/>
</dbReference>
<sequence>MEAHDAHVNSEESENPGAAPYGNFINYYTFNPPENRLSLIPEALLQNIGFTSGDGERVLMLDVGCNSGDLSVALYKHLLNKEACTSDSPRQELYMLGFDLDQDLILRAQTSNPFPQNIQFIPLDITDDTESRAVLQAFLGKFGCSRFHLSTCFAVTMWVHLNHGDAAFLSLLSRLASHSEYLLLEAQPWKCYRSAARRLRKLGRSDFDHFKALKIRGDMAAHAREHLEKQCSMELVQCFGNTSWDRSLLLFRRQ</sequence>
<organism>
    <name type="scientific">Danio rerio</name>
    <name type="common">Zebrafish</name>
    <name type="synonym">Brachydanio rerio</name>
    <dbReference type="NCBI Taxonomy" id="7955"/>
    <lineage>
        <taxon>Eukaryota</taxon>
        <taxon>Metazoa</taxon>
        <taxon>Chordata</taxon>
        <taxon>Craniata</taxon>
        <taxon>Vertebrata</taxon>
        <taxon>Euteleostomi</taxon>
        <taxon>Actinopterygii</taxon>
        <taxon>Neopterygii</taxon>
        <taxon>Teleostei</taxon>
        <taxon>Ostariophysi</taxon>
        <taxon>Cypriniformes</taxon>
        <taxon>Danionidae</taxon>
        <taxon>Danioninae</taxon>
        <taxon>Danio</taxon>
    </lineage>
</organism>
<gene>
    <name type="primary">bcdin3d</name>
    <name type="ORF">si:dkey-222f2.2</name>
</gene>
<feature type="chain" id="PRO_0000420470" description="Pre-miRNA 5'-monophosphate methyltransferase">
    <location>
        <begin position="1"/>
        <end position="254"/>
    </location>
</feature>
<feature type="domain" description="Bin3-type SAM" evidence="2">
    <location>
        <begin position="34"/>
        <end position="254"/>
    </location>
</feature>
<feature type="binding site" evidence="1">
    <location>
        <position position="36"/>
    </location>
    <ligand>
        <name>S-adenosyl-L-methionine</name>
        <dbReference type="ChEBI" id="CHEBI:59789"/>
    </ligand>
</feature>
<feature type="binding site" evidence="1">
    <location>
        <position position="66"/>
    </location>
    <ligand>
        <name>S-adenosyl-L-methionine</name>
        <dbReference type="ChEBI" id="CHEBI:59789"/>
    </ligand>
</feature>
<feature type="binding site" evidence="1">
    <location>
        <position position="99"/>
    </location>
    <ligand>
        <name>S-adenosyl-L-methionine</name>
        <dbReference type="ChEBI" id="CHEBI:59789"/>
    </ligand>
</feature>
<feature type="binding site" evidence="1">
    <location>
        <begin position="124"/>
        <end position="125"/>
    </location>
    <ligand>
        <name>S-adenosyl-L-methionine</name>
        <dbReference type="ChEBI" id="CHEBI:59789"/>
    </ligand>
</feature>
<reference key="1">
    <citation type="journal article" date="2013" name="Nature">
        <title>The zebrafish reference genome sequence and its relationship to the human genome.</title>
        <authorList>
            <person name="Howe K."/>
            <person name="Clark M.D."/>
            <person name="Torroja C.F."/>
            <person name="Torrance J."/>
            <person name="Berthelot C."/>
            <person name="Muffato M."/>
            <person name="Collins J.E."/>
            <person name="Humphray S."/>
            <person name="McLaren K."/>
            <person name="Matthews L."/>
            <person name="McLaren S."/>
            <person name="Sealy I."/>
            <person name="Caccamo M."/>
            <person name="Churcher C."/>
            <person name="Scott C."/>
            <person name="Barrett J.C."/>
            <person name="Koch R."/>
            <person name="Rauch G.J."/>
            <person name="White S."/>
            <person name="Chow W."/>
            <person name="Kilian B."/>
            <person name="Quintais L.T."/>
            <person name="Guerra-Assuncao J.A."/>
            <person name="Zhou Y."/>
            <person name="Gu Y."/>
            <person name="Yen J."/>
            <person name="Vogel J.H."/>
            <person name="Eyre T."/>
            <person name="Redmond S."/>
            <person name="Banerjee R."/>
            <person name="Chi J."/>
            <person name="Fu B."/>
            <person name="Langley E."/>
            <person name="Maguire S.F."/>
            <person name="Laird G.K."/>
            <person name="Lloyd D."/>
            <person name="Kenyon E."/>
            <person name="Donaldson S."/>
            <person name="Sehra H."/>
            <person name="Almeida-King J."/>
            <person name="Loveland J."/>
            <person name="Trevanion S."/>
            <person name="Jones M."/>
            <person name="Quail M."/>
            <person name="Willey D."/>
            <person name="Hunt A."/>
            <person name="Burton J."/>
            <person name="Sims S."/>
            <person name="McLay K."/>
            <person name="Plumb B."/>
            <person name="Davis J."/>
            <person name="Clee C."/>
            <person name="Oliver K."/>
            <person name="Clark R."/>
            <person name="Riddle C."/>
            <person name="Elliot D."/>
            <person name="Threadgold G."/>
            <person name="Harden G."/>
            <person name="Ware D."/>
            <person name="Begum S."/>
            <person name="Mortimore B."/>
            <person name="Kerry G."/>
            <person name="Heath P."/>
            <person name="Phillimore B."/>
            <person name="Tracey A."/>
            <person name="Corby N."/>
            <person name="Dunn M."/>
            <person name="Johnson C."/>
            <person name="Wood J."/>
            <person name="Clark S."/>
            <person name="Pelan S."/>
            <person name="Griffiths G."/>
            <person name="Smith M."/>
            <person name="Glithero R."/>
            <person name="Howden P."/>
            <person name="Barker N."/>
            <person name="Lloyd C."/>
            <person name="Stevens C."/>
            <person name="Harley J."/>
            <person name="Holt K."/>
            <person name="Panagiotidis G."/>
            <person name="Lovell J."/>
            <person name="Beasley H."/>
            <person name="Henderson C."/>
            <person name="Gordon D."/>
            <person name="Auger K."/>
            <person name="Wright D."/>
            <person name="Collins J."/>
            <person name="Raisen C."/>
            <person name="Dyer L."/>
            <person name="Leung K."/>
            <person name="Robertson L."/>
            <person name="Ambridge K."/>
            <person name="Leongamornlert D."/>
            <person name="McGuire S."/>
            <person name="Gilderthorp R."/>
            <person name="Griffiths C."/>
            <person name="Manthravadi D."/>
            <person name="Nichol S."/>
            <person name="Barker G."/>
            <person name="Whitehead S."/>
            <person name="Kay M."/>
            <person name="Brown J."/>
            <person name="Murnane C."/>
            <person name="Gray E."/>
            <person name="Humphries M."/>
            <person name="Sycamore N."/>
            <person name="Barker D."/>
            <person name="Saunders D."/>
            <person name="Wallis J."/>
            <person name="Babbage A."/>
            <person name="Hammond S."/>
            <person name="Mashreghi-Mohammadi M."/>
            <person name="Barr L."/>
            <person name="Martin S."/>
            <person name="Wray P."/>
            <person name="Ellington A."/>
            <person name="Matthews N."/>
            <person name="Ellwood M."/>
            <person name="Woodmansey R."/>
            <person name="Clark G."/>
            <person name="Cooper J."/>
            <person name="Tromans A."/>
            <person name="Grafham D."/>
            <person name="Skuce C."/>
            <person name="Pandian R."/>
            <person name="Andrews R."/>
            <person name="Harrison E."/>
            <person name="Kimberley A."/>
            <person name="Garnett J."/>
            <person name="Fosker N."/>
            <person name="Hall R."/>
            <person name="Garner P."/>
            <person name="Kelly D."/>
            <person name="Bird C."/>
            <person name="Palmer S."/>
            <person name="Gehring I."/>
            <person name="Berger A."/>
            <person name="Dooley C.M."/>
            <person name="Ersan-Urun Z."/>
            <person name="Eser C."/>
            <person name="Geiger H."/>
            <person name="Geisler M."/>
            <person name="Karotki L."/>
            <person name="Kirn A."/>
            <person name="Konantz J."/>
            <person name="Konantz M."/>
            <person name="Oberlander M."/>
            <person name="Rudolph-Geiger S."/>
            <person name="Teucke M."/>
            <person name="Lanz C."/>
            <person name="Raddatz G."/>
            <person name="Osoegawa K."/>
            <person name="Zhu B."/>
            <person name="Rapp A."/>
            <person name="Widaa S."/>
            <person name="Langford C."/>
            <person name="Yang F."/>
            <person name="Schuster S.C."/>
            <person name="Carter N.P."/>
            <person name="Harrow J."/>
            <person name="Ning Z."/>
            <person name="Herrero J."/>
            <person name="Searle S.M."/>
            <person name="Enright A."/>
            <person name="Geisler R."/>
            <person name="Plasterk R.H."/>
            <person name="Lee C."/>
            <person name="Westerfield M."/>
            <person name="de Jong P.J."/>
            <person name="Zon L.I."/>
            <person name="Postlethwait J.H."/>
            <person name="Nusslein-Volhard C."/>
            <person name="Hubbard T.J."/>
            <person name="Roest Crollius H."/>
            <person name="Rogers J."/>
            <person name="Stemple D.L."/>
        </authorList>
    </citation>
    <scope>NUCLEOTIDE SEQUENCE [LARGE SCALE GENOMIC DNA]</scope>
    <source>
        <strain>Tuebingen</strain>
    </source>
</reference>
<proteinExistence type="inferred from homology"/>
<comment type="function">
    <text evidence="1">O-methyltransferase that specifically monomethylates 5'-monophosphate of cytoplasmic histidyl tRNA (tRNA(His)), acting as a capping enzyme by protecting tRNA(His) from cleavage by DICER1. Also able, with less efficiently, to methylate the 5' monophosphate of a subset of pre-miRNAs, acting as a negative regulator of miRNA processing. The 5' monophosphate of pre-miRNAs is recognized by DICER1 and is required for pre-miRNAs processing: methylation at this position reduces the processing of pre-miRNAs by DICER1. Was also reported to mediate dimethylation of pre-miR-145; however dimethylation cannot be reproduced by another group which observes a monomethylation of pre-miR-145.</text>
</comment>
<comment type="catalytic activity">
    <reaction evidence="1">
        <text>a 5'-end 5'-phospho-ribonucleoside-RNA + S-adenosyl-L-methionine = a 5'-end (5'-methylphospho)-ribonucleoside-RNA + S-adenosyl-L-homocysteine</text>
        <dbReference type="Rhea" id="RHEA:58656"/>
        <dbReference type="Rhea" id="RHEA-COMP:15179"/>
        <dbReference type="Rhea" id="RHEA-COMP:15181"/>
        <dbReference type="ChEBI" id="CHEBI:57856"/>
        <dbReference type="ChEBI" id="CHEBI:59789"/>
        <dbReference type="ChEBI" id="CHEBI:138282"/>
        <dbReference type="ChEBI" id="CHEBI:142776"/>
    </reaction>
</comment>
<comment type="catalytic activity">
    <reaction evidence="1">
        <text>a 5'-end 5'-phospho-ribonucleoside-RNA + 2 S-adenosyl-L-methionine = a 5'-end (5'-bismethylphospho)-ribonucleoside-RNA + 2 S-adenosyl-L-homocysteine</text>
        <dbReference type="Rhea" id="RHEA:58640"/>
        <dbReference type="Rhea" id="RHEA-COMP:15179"/>
        <dbReference type="Rhea" id="RHEA-COMP:15182"/>
        <dbReference type="ChEBI" id="CHEBI:57856"/>
        <dbReference type="ChEBI" id="CHEBI:59789"/>
        <dbReference type="ChEBI" id="CHEBI:138282"/>
        <dbReference type="ChEBI" id="CHEBI:142777"/>
    </reaction>
</comment>
<comment type="subcellular location">
    <subcellularLocation>
        <location evidence="1">Cytoplasm</location>
    </subcellularLocation>
</comment>
<comment type="similarity">
    <text evidence="3">Belongs to the methyltransferase superfamily.</text>
</comment>
<protein>
    <recommendedName>
        <fullName>Pre-miRNA 5'-monophosphate methyltransferase</fullName>
        <ecNumber>2.1.1.-</ecNumber>
    </recommendedName>
    <alternativeName>
        <fullName>BCDIN3 domain-containing protein</fullName>
    </alternativeName>
</protein>
<accession>A8E7D2</accession>
<accession>F1QAZ2</accession>
<accession>F1QCI6</accession>
<evidence type="ECO:0000250" key="1">
    <source>
        <dbReference type="UniProtKB" id="Q7Z5W3"/>
    </source>
</evidence>
<evidence type="ECO:0000255" key="2">
    <source>
        <dbReference type="PROSITE-ProRule" id="PRU00848"/>
    </source>
</evidence>
<evidence type="ECO:0000305" key="3"/>